<reference key="1">
    <citation type="submission" date="2005-07" db="EMBL/GenBank/DDBJ databases">
        <authorList>
            <person name="Mural R.J."/>
            <person name="Adams M.D."/>
            <person name="Myers E.W."/>
            <person name="Smith H.O."/>
            <person name="Venter J.C."/>
        </authorList>
    </citation>
    <scope>NUCLEOTIDE SEQUENCE [LARGE SCALE GENOMIC DNA]</scope>
    <source>
        <strain>Brown Norway</strain>
    </source>
</reference>
<reference key="2">
    <citation type="journal article" date="2004" name="Genome Res.">
        <title>The status, quality, and expansion of the NIH full-length cDNA project: the Mammalian Gene Collection (MGC).</title>
        <authorList>
            <consortium name="The MGC Project Team"/>
        </authorList>
    </citation>
    <scope>NUCLEOTIDE SEQUENCE [LARGE SCALE MRNA]</scope>
    <source>
        <tissue>Prostate</tissue>
    </source>
</reference>
<comment type="function">
    <text evidence="1">Plays a role in store-operated Ca(2+) entry (SOCE).</text>
</comment>
<comment type="similarity">
    <text evidence="6">Belongs to the EFCAB4 family.</text>
</comment>
<evidence type="ECO:0000250" key="1"/>
<evidence type="ECO:0000250" key="2">
    <source>
        <dbReference type="UniProtKB" id="Q8N4Y2"/>
    </source>
</evidence>
<evidence type="ECO:0000255" key="3"/>
<evidence type="ECO:0000255" key="4">
    <source>
        <dbReference type="PROSITE-ProRule" id="PRU00448"/>
    </source>
</evidence>
<evidence type="ECO:0000256" key="5">
    <source>
        <dbReference type="SAM" id="MobiDB-lite"/>
    </source>
</evidence>
<evidence type="ECO:0000305" key="6"/>
<dbReference type="EMBL" id="CH473953">
    <property type="protein sequence ID" value="EDM12067.1"/>
    <property type="molecule type" value="Genomic_DNA"/>
</dbReference>
<dbReference type="EMBL" id="CH473953">
    <property type="protein sequence ID" value="EDM12068.1"/>
    <property type="molecule type" value="Genomic_DNA"/>
</dbReference>
<dbReference type="EMBL" id="CH473953">
    <property type="protein sequence ID" value="EDM12069.1"/>
    <property type="molecule type" value="Genomic_DNA"/>
</dbReference>
<dbReference type="EMBL" id="BC158864">
    <property type="protein sequence ID" value="AAI58865.1"/>
    <property type="molecule type" value="mRNA"/>
</dbReference>
<dbReference type="RefSeq" id="NP_001121013.1">
    <property type="nucleotide sequence ID" value="NM_001127541.2"/>
</dbReference>
<dbReference type="RefSeq" id="XP_006230621.1">
    <property type="nucleotide sequence ID" value="XM_006230559.5"/>
</dbReference>
<dbReference type="RefSeq" id="XP_006230623.1">
    <property type="nucleotide sequence ID" value="XM_006230561.5"/>
</dbReference>
<dbReference type="RefSeq" id="XP_006230657.1">
    <property type="nucleotide sequence ID" value="XM_006230595.3"/>
</dbReference>
<dbReference type="RefSeq" id="XP_006230658.1">
    <property type="nucleotide sequence ID" value="XM_006230596.3"/>
</dbReference>
<dbReference type="RefSeq" id="XP_006230659.1">
    <property type="nucleotide sequence ID" value="XM_006230597.3"/>
</dbReference>
<dbReference type="RefSeq" id="XP_017459705.1">
    <property type="nucleotide sequence ID" value="XM_017604216.1"/>
</dbReference>
<dbReference type="RefSeq" id="XP_017459708.1">
    <property type="nucleotide sequence ID" value="XM_017604219.1"/>
</dbReference>
<dbReference type="RefSeq" id="XP_017459713.1">
    <property type="nucleotide sequence ID" value="XM_017604224.1"/>
</dbReference>
<dbReference type="RefSeq" id="XP_038934966.1">
    <property type="nucleotide sequence ID" value="XM_039079038.2"/>
</dbReference>
<dbReference type="RefSeq" id="XP_063120153.1">
    <property type="nucleotide sequence ID" value="XM_063264083.1"/>
</dbReference>
<dbReference type="RefSeq" id="XP_063120155.1">
    <property type="nucleotide sequence ID" value="XM_063264085.1"/>
</dbReference>
<dbReference type="RefSeq" id="XP_063120160.1">
    <property type="nucleotide sequence ID" value="XM_063264090.1"/>
</dbReference>
<dbReference type="SMR" id="B0BNK9"/>
<dbReference type="FunCoup" id="B0BNK9">
    <property type="interactions" value="71"/>
</dbReference>
<dbReference type="STRING" id="10116.ENSRNOP00000025964"/>
<dbReference type="PhosphoSitePlus" id="B0BNK9"/>
<dbReference type="PaxDb" id="10116-ENSRNOP00000025964"/>
<dbReference type="PeptideAtlas" id="B0BNK9"/>
<dbReference type="Ensembl" id="ENSRNOT00000025964.6">
    <property type="protein sequence ID" value="ENSRNOP00000025964.4"/>
    <property type="gene ID" value="ENSRNOG00000019199.6"/>
</dbReference>
<dbReference type="GeneID" id="309112"/>
<dbReference type="KEGG" id="rno:309112"/>
<dbReference type="UCSC" id="RGD:1560911">
    <property type="organism name" value="rat"/>
</dbReference>
<dbReference type="AGR" id="RGD:1560911"/>
<dbReference type="CTD" id="283229"/>
<dbReference type="RGD" id="1560911">
    <property type="gene designation" value="Cracr2b"/>
</dbReference>
<dbReference type="eggNOG" id="ENOG502QRXK">
    <property type="taxonomic scope" value="Eukaryota"/>
</dbReference>
<dbReference type="GeneTree" id="ENSGT00440000033504"/>
<dbReference type="HOGENOM" id="CLU_047014_1_0_1"/>
<dbReference type="InParanoid" id="B0BNK9"/>
<dbReference type="OMA" id="CCHHLGT"/>
<dbReference type="OrthoDB" id="9837699at2759"/>
<dbReference type="PhylomeDB" id="B0BNK9"/>
<dbReference type="TreeFam" id="TF329556"/>
<dbReference type="PRO" id="PR:B0BNK9"/>
<dbReference type="Proteomes" id="UP000002494">
    <property type="component" value="Chromosome 1"/>
</dbReference>
<dbReference type="Proteomes" id="UP000234681">
    <property type="component" value="Chromosome 1"/>
</dbReference>
<dbReference type="Bgee" id="ENSRNOG00000019199">
    <property type="expression patterns" value="Expressed in stomach and 16 other cell types or tissues"/>
</dbReference>
<dbReference type="GO" id="GO:0005509">
    <property type="term" value="F:calcium ion binding"/>
    <property type="evidence" value="ECO:0007669"/>
    <property type="project" value="InterPro"/>
</dbReference>
<dbReference type="GO" id="GO:0002115">
    <property type="term" value="P:store-operated calcium entry"/>
    <property type="evidence" value="ECO:0000250"/>
    <property type="project" value="UniProtKB"/>
</dbReference>
<dbReference type="Gene3D" id="1.10.238.10">
    <property type="entry name" value="EF-hand"/>
    <property type="match status" value="1"/>
</dbReference>
<dbReference type="InterPro" id="IPR051111">
    <property type="entry name" value="Ca-binding_regulatory"/>
</dbReference>
<dbReference type="InterPro" id="IPR011992">
    <property type="entry name" value="EF-hand-dom_pair"/>
</dbReference>
<dbReference type="InterPro" id="IPR002048">
    <property type="entry name" value="EF_hand_dom"/>
</dbReference>
<dbReference type="PANTHER" id="PTHR46311:SF3">
    <property type="entry name" value="CALCIUM-BINDING PROTEIN 8"/>
    <property type="match status" value="1"/>
</dbReference>
<dbReference type="PANTHER" id="PTHR46311">
    <property type="entry name" value="CALCIUM-BINDING PROTEIN 8-RELATED"/>
    <property type="match status" value="1"/>
</dbReference>
<dbReference type="Pfam" id="PF13499">
    <property type="entry name" value="EF-hand_7"/>
    <property type="match status" value="1"/>
</dbReference>
<dbReference type="SMART" id="SM00054">
    <property type="entry name" value="EFh"/>
    <property type="match status" value="2"/>
</dbReference>
<dbReference type="SUPFAM" id="SSF47473">
    <property type="entry name" value="EF-hand"/>
    <property type="match status" value="1"/>
</dbReference>
<dbReference type="PROSITE" id="PS50222">
    <property type="entry name" value="EF_HAND_2"/>
    <property type="match status" value="2"/>
</dbReference>
<feature type="chain" id="PRO_0000395806" description="EF-hand calcium-binding domain-containing protein 4A">
    <location>
        <begin position="1"/>
        <end position="393"/>
    </location>
</feature>
<feature type="domain" description="EF-hand 1" evidence="4">
    <location>
        <begin position="28"/>
        <end position="63"/>
    </location>
</feature>
<feature type="domain" description="EF-hand 2" evidence="4">
    <location>
        <begin position="65"/>
        <end position="97"/>
    </location>
</feature>
<feature type="region of interest" description="Disordered" evidence="5">
    <location>
        <begin position="1"/>
        <end position="24"/>
    </location>
</feature>
<feature type="region of interest" description="Disordered" evidence="5">
    <location>
        <begin position="214"/>
        <end position="239"/>
    </location>
</feature>
<feature type="coiled-coil region" evidence="3">
    <location>
        <begin position="173"/>
        <end position="352"/>
    </location>
</feature>
<feature type="compositionally biased region" description="Basic and acidic residues" evidence="5">
    <location>
        <begin position="227"/>
        <end position="239"/>
    </location>
</feature>
<feature type="modified residue" description="Phosphoserine" evidence="2">
    <location>
        <position position="3"/>
    </location>
</feature>
<keyword id="KW-0175">Coiled coil</keyword>
<keyword id="KW-0597">Phosphoprotein</keyword>
<keyword id="KW-1185">Reference proteome</keyword>
<keyword id="KW-0677">Repeat</keyword>
<gene>
    <name type="primary">Cracr2b</name>
    <name type="synonym">Efcab4a</name>
</gene>
<protein>
    <recommendedName>
        <fullName>EF-hand calcium-binding domain-containing protein 4A</fullName>
    </recommendedName>
    <alternativeName>
        <fullName>Calcium release-activated channel regulator 2B</fullName>
    </alternativeName>
</protein>
<sequence length="393" mass="44553">MASPGPPGAGQGQEEEERAGVSAGHQAEVLQQAQELFVLCDKDAKGFITRQDLQGLQSDLPLTPEQLEAVFESLDQAHTGFLTAREFCLGLGKFVGVESVPGRAPLRTPEETFESGTGGSLEEEDDVETFYTSLEKLGVARVLGEQWAVRTLWVGLQRERPELLGSLEEILMRASACLEAAARERDGLEQALRRRESEHEREVRGLYEELEQQLREQRQRRQSQNPPREEERGHLELELQTREQELERAALRQRELEQQLQARAAEQLEVQAQHIQLQRAYEALRAQLDQAQEQLIRLEGEAQGRQEQTQRDVVAVSRNMQKEKLSLLRQLELLRELNLRLRDERDACETKLLGSSHRKALAIAHKPGPIYCCCCCGWARPPRRGSGHLPSAR</sequence>
<organism>
    <name type="scientific">Rattus norvegicus</name>
    <name type="common">Rat</name>
    <dbReference type="NCBI Taxonomy" id="10116"/>
    <lineage>
        <taxon>Eukaryota</taxon>
        <taxon>Metazoa</taxon>
        <taxon>Chordata</taxon>
        <taxon>Craniata</taxon>
        <taxon>Vertebrata</taxon>
        <taxon>Euteleostomi</taxon>
        <taxon>Mammalia</taxon>
        <taxon>Eutheria</taxon>
        <taxon>Euarchontoglires</taxon>
        <taxon>Glires</taxon>
        <taxon>Rodentia</taxon>
        <taxon>Myomorpha</taxon>
        <taxon>Muroidea</taxon>
        <taxon>Muridae</taxon>
        <taxon>Murinae</taxon>
        <taxon>Rattus</taxon>
    </lineage>
</organism>
<name>EFC4A_RAT</name>
<proteinExistence type="evidence at transcript level"/>
<accession>B0BNK9</accession>